<sequence length="628" mass="68564">MPCVQAQYSPSPPGSTYATQTYGSEYTTEIMNPDYAKLTMDLGSTGIMATATTSLPSFSTFMEGYPSSCELKPSCLYQMPPSGPRPLIKMEEGREHGYHHHHHHHHHHHHHHQQQQPSIPPPSGPEDEVLPSTSMYFKQSPPSTPTTPGFPPQAGALWDDELPSAPGCIAPGPLLDPQMKAVPPMAAAARFPIFFKPSPPHPPAPSPAGGHHLGYDPTAAAALSLPLGAAAAAGSQAAALEGHPYGLPLAKRTATLTFPPLGLTASPTASSLLGESPSLPSPPNRSSSSGEGTCAVCGDNAACQHYGVRTCEGCKGFFKRTVQKNAKYVCLANKNCPVDKRRRNRCQYCRFQKCLSVGMVKEVVRTDSLKGRRGRLPSKPKSPLQQEPSQPSPPSPPICMMNALVRALTDATPRDLDYSRYCPTDQATAGTDAEHVQQFYNLLTASIDVSRSWAEKIPGFTDLPKEDQTLLIESAFLELFVLRLSIRSNTAEDKFVFCNGLVLHRLQCLRGFGEWLDSIKDFSLNLQSLNLDIQALACLSALSMITERHGLKEPKRVEELCNKITSSLKDHQRKGQALEPSEPKVLRALVELRKICTQGLQRIFYLKLEDLVSPPSVIDKLFLDTLPF</sequence>
<organism>
    <name type="scientific">Rattus norvegicus</name>
    <name type="common">Rat</name>
    <dbReference type="NCBI Taxonomy" id="10116"/>
    <lineage>
        <taxon>Eukaryota</taxon>
        <taxon>Metazoa</taxon>
        <taxon>Chordata</taxon>
        <taxon>Craniata</taxon>
        <taxon>Vertebrata</taxon>
        <taxon>Euteleostomi</taxon>
        <taxon>Mammalia</taxon>
        <taxon>Eutheria</taxon>
        <taxon>Euarchontoglires</taxon>
        <taxon>Glires</taxon>
        <taxon>Rodentia</taxon>
        <taxon>Myomorpha</taxon>
        <taxon>Muroidea</taxon>
        <taxon>Muridae</taxon>
        <taxon>Murinae</taxon>
        <taxon>Rattus</taxon>
    </lineage>
</organism>
<accession>P51179</accession>
<accession>Q2XPY2</accession>
<accession>Q63516</accession>
<accession>Q9QWQ3</accession>
<feature type="chain" id="PRO_0000053724" description="Nuclear receptor subfamily 4 group A member 3">
    <location>
        <begin position="1"/>
        <end position="628"/>
    </location>
</feature>
<feature type="domain" description="NR LBD" evidence="4">
    <location>
        <begin position="396"/>
        <end position="625"/>
    </location>
</feature>
<feature type="DNA-binding region" description="Nuclear receptor" evidence="3">
    <location>
        <begin position="291"/>
        <end position="366"/>
    </location>
</feature>
<feature type="zinc finger region" description="NR C4-type" evidence="3">
    <location>
        <begin position="294"/>
        <end position="314"/>
    </location>
</feature>
<feature type="zinc finger region" description="NR C4-type" evidence="3">
    <location>
        <begin position="330"/>
        <end position="354"/>
    </location>
</feature>
<feature type="region of interest" description="Interaction with NCOA1, NCOA2, NCOA3 and KAT2B" evidence="2">
    <location>
        <begin position="1"/>
        <end position="293"/>
    </location>
</feature>
<feature type="region of interest" description="Required for DNA-PK heterotrimer" evidence="1">
    <location>
        <begin position="1"/>
        <end position="140"/>
    </location>
</feature>
<feature type="region of interest" description="Activation function (AF)-1 domain" evidence="2">
    <location>
        <begin position="1"/>
        <end position="112"/>
    </location>
</feature>
<feature type="region of interest" description="Disordered" evidence="5">
    <location>
        <begin position="96"/>
        <end position="163"/>
    </location>
</feature>
<feature type="region of interest" description="Disordered" evidence="5">
    <location>
        <begin position="269"/>
        <end position="290"/>
    </location>
</feature>
<feature type="region of interest" description="Disordered" evidence="5">
    <location>
        <begin position="366"/>
        <end position="396"/>
    </location>
</feature>
<feature type="region of interest" description="Interaction with KAT2B" evidence="2">
    <location>
        <begin position="381"/>
        <end position="628"/>
    </location>
</feature>
<feature type="compositionally biased region" description="Basic residues" evidence="5">
    <location>
        <begin position="97"/>
        <end position="113"/>
    </location>
</feature>
<feature type="compositionally biased region" description="Pro residues" evidence="5">
    <location>
        <begin position="142"/>
        <end position="151"/>
    </location>
</feature>
<feature type="compositionally biased region" description="Low complexity" evidence="5">
    <location>
        <begin position="270"/>
        <end position="289"/>
    </location>
</feature>
<feature type="compositionally biased region" description="Low complexity" evidence="5">
    <location>
        <begin position="379"/>
        <end position="389"/>
    </location>
</feature>
<feature type="splice variant" id="VSP_010085" description="In isoform 2." evidence="13">
    <original>YCPTDQATAG</original>
    <variation>VSSVNRFEWF</variation>
    <location>
        <begin position="421"/>
        <end position="430"/>
    </location>
</feature>
<feature type="splice variant" id="VSP_010086" description="In isoform 2." evidence="13">
    <location>
        <begin position="431"/>
        <end position="628"/>
    </location>
</feature>
<feature type="sequence conflict" description="In Ref. 2; CAA59993." evidence="14" ref="2">
    <original>P</original>
    <variation>Q</variation>
    <location>
        <position position="13"/>
    </location>
</feature>
<feature type="sequence conflict" description="In Ref. 2; CAA59993." evidence="14" ref="2">
    <original>A</original>
    <variation>P</variation>
    <location>
        <position position="18"/>
    </location>
</feature>
<dbReference type="EMBL" id="D38530">
    <property type="protein sequence ID" value="BAA07535.1"/>
    <property type="molecule type" value="mRNA"/>
</dbReference>
<dbReference type="EMBL" id="X86003">
    <property type="protein sequence ID" value="CAA59993.1"/>
    <property type="molecule type" value="mRNA"/>
</dbReference>
<dbReference type="EMBL" id="DQ268830">
    <property type="protein sequence ID" value="ABB72200.1"/>
    <property type="molecule type" value="mRNA"/>
</dbReference>
<dbReference type="EMBL" id="L19343">
    <property type="protein sequence ID" value="AAB46395.1"/>
    <property type="molecule type" value="mRNA"/>
</dbReference>
<dbReference type="PIR" id="JC2493">
    <property type="entry name" value="JC2493"/>
</dbReference>
<dbReference type="PIR" id="S66671">
    <property type="entry name" value="S66671"/>
</dbReference>
<dbReference type="RefSeq" id="NP_113816.1">
    <molecule id="P51179-1"/>
    <property type="nucleotide sequence ID" value="NM_031628.3"/>
</dbReference>
<dbReference type="RefSeq" id="XP_017449093.1">
    <property type="nucleotide sequence ID" value="XM_017593604.1"/>
</dbReference>
<dbReference type="RefSeq" id="XP_038966619.1">
    <molecule id="P51179-1"/>
    <property type="nucleotide sequence ID" value="XM_039110691.2"/>
</dbReference>
<dbReference type="RefSeq" id="XP_038966620.1">
    <molecule id="P51179-1"/>
    <property type="nucleotide sequence ID" value="XM_039110692.2"/>
</dbReference>
<dbReference type="RefSeq" id="XP_063144401.1">
    <molecule id="P51179-1"/>
    <property type="nucleotide sequence ID" value="XM_063288331.1"/>
</dbReference>
<dbReference type="SMR" id="P51179"/>
<dbReference type="FunCoup" id="P51179">
    <property type="interactions" value="325"/>
</dbReference>
<dbReference type="IntAct" id="P51179">
    <property type="interactions" value="1"/>
</dbReference>
<dbReference type="STRING" id="10116.ENSRNOP00000008302"/>
<dbReference type="PhosphoSitePlus" id="P51179"/>
<dbReference type="PaxDb" id="10116-ENSRNOP00000008302"/>
<dbReference type="Ensembl" id="ENSRNOT00000008302.5">
    <molecule id="P51179-1"/>
    <property type="protein sequence ID" value="ENSRNOP00000008302.2"/>
    <property type="gene ID" value="ENSRNOG00000005964.6"/>
</dbReference>
<dbReference type="GeneID" id="58853"/>
<dbReference type="KEGG" id="rno:58853"/>
<dbReference type="UCSC" id="RGD:61882">
    <molecule id="P51179-1"/>
    <property type="organism name" value="rat"/>
</dbReference>
<dbReference type="AGR" id="RGD:61882"/>
<dbReference type="CTD" id="8013"/>
<dbReference type="RGD" id="61882">
    <property type="gene designation" value="Nr4a3"/>
</dbReference>
<dbReference type="eggNOG" id="KOG4217">
    <property type="taxonomic scope" value="Eukaryota"/>
</dbReference>
<dbReference type="GeneTree" id="ENSGT00950000183038"/>
<dbReference type="HOGENOM" id="CLU_007368_14_2_1"/>
<dbReference type="InParanoid" id="P51179"/>
<dbReference type="OMA" id="DFIPYTH"/>
<dbReference type="OrthoDB" id="5952118at2759"/>
<dbReference type="PhylomeDB" id="P51179"/>
<dbReference type="Reactome" id="R-RNO-383280">
    <property type="pathway name" value="Nuclear Receptor transcription pathway"/>
</dbReference>
<dbReference type="PRO" id="PR:P51179"/>
<dbReference type="Proteomes" id="UP000002494">
    <property type="component" value="Chromosome 5"/>
</dbReference>
<dbReference type="Bgee" id="ENSRNOG00000005964">
    <property type="expression patterns" value="Expressed in Ammon's horn and 13 other cell types or tissues"/>
</dbReference>
<dbReference type="GO" id="GO:0005634">
    <property type="term" value="C:nucleus"/>
    <property type="evidence" value="ECO:0000318"/>
    <property type="project" value="GO_Central"/>
</dbReference>
<dbReference type="GO" id="GO:0005667">
    <property type="term" value="C:transcription regulator complex"/>
    <property type="evidence" value="ECO:0000266"/>
    <property type="project" value="RGD"/>
</dbReference>
<dbReference type="GO" id="GO:0035497">
    <property type="term" value="F:cAMP response element binding"/>
    <property type="evidence" value="ECO:0000250"/>
    <property type="project" value="UniProtKB"/>
</dbReference>
<dbReference type="GO" id="GO:0003677">
    <property type="term" value="F:DNA binding"/>
    <property type="evidence" value="ECO:0000314"/>
    <property type="project" value="RGD"/>
</dbReference>
<dbReference type="GO" id="GO:0001216">
    <property type="term" value="F:DNA-binding transcription activator activity"/>
    <property type="evidence" value="ECO:0000266"/>
    <property type="project" value="RGD"/>
</dbReference>
<dbReference type="GO" id="GO:0001228">
    <property type="term" value="F:DNA-binding transcription activator activity, RNA polymerase II-specific"/>
    <property type="evidence" value="ECO:0000314"/>
    <property type="project" value="UniProtKB"/>
</dbReference>
<dbReference type="GO" id="GO:0000981">
    <property type="term" value="F:DNA-binding transcription factor activity, RNA polymerase II-specific"/>
    <property type="evidence" value="ECO:0000318"/>
    <property type="project" value="GO_Central"/>
</dbReference>
<dbReference type="GO" id="GO:0035035">
    <property type="term" value="F:histone acetyltransferase binding"/>
    <property type="evidence" value="ECO:0000266"/>
    <property type="project" value="RGD"/>
</dbReference>
<dbReference type="GO" id="GO:0035259">
    <property type="term" value="F:nuclear glucocorticoid receptor binding"/>
    <property type="evidence" value="ECO:0000353"/>
    <property type="project" value="UniProtKB"/>
</dbReference>
<dbReference type="GO" id="GO:0004879">
    <property type="term" value="F:nuclear receptor activity"/>
    <property type="evidence" value="ECO:0007669"/>
    <property type="project" value="InterPro"/>
</dbReference>
<dbReference type="GO" id="GO:0042803">
    <property type="term" value="F:protein homodimerization activity"/>
    <property type="evidence" value="ECO:0000314"/>
    <property type="project" value="UniProtKB"/>
</dbReference>
<dbReference type="GO" id="GO:0019901">
    <property type="term" value="F:protein kinase binding"/>
    <property type="evidence" value="ECO:0000266"/>
    <property type="project" value="RGD"/>
</dbReference>
<dbReference type="GO" id="GO:0000978">
    <property type="term" value="F:RNA polymerase II cis-regulatory region sequence-specific DNA binding"/>
    <property type="evidence" value="ECO:0000266"/>
    <property type="project" value="RGD"/>
</dbReference>
<dbReference type="GO" id="GO:0043565">
    <property type="term" value="F:sequence-specific DNA binding"/>
    <property type="evidence" value="ECO:0000266"/>
    <property type="project" value="RGD"/>
</dbReference>
<dbReference type="GO" id="GO:0001223">
    <property type="term" value="F:transcription coactivator binding"/>
    <property type="evidence" value="ECO:0000266"/>
    <property type="project" value="RGD"/>
</dbReference>
<dbReference type="GO" id="GO:0008270">
    <property type="term" value="F:zinc ion binding"/>
    <property type="evidence" value="ECO:0007669"/>
    <property type="project" value="UniProtKB-KW"/>
</dbReference>
<dbReference type="GO" id="GO:0030534">
    <property type="term" value="P:adult behavior"/>
    <property type="evidence" value="ECO:0000266"/>
    <property type="project" value="RGD"/>
</dbReference>
<dbReference type="GO" id="GO:0031100">
    <property type="term" value="P:animal organ regeneration"/>
    <property type="evidence" value="ECO:0000270"/>
    <property type="project" value="RGD"/>
</dbReference>
<dbReference type="GO" id="GO:0007411">
    <property type="term" value="P:axon guidance"/>
    <property type="evidence" value="ECO:0000266"/>
    <property type="project" value="RGD"/>
</dbReference>
<dbReference type="GO" id="GO:0045333">
    <property type="term" value="P:cellular respiration"/>
    <property type="evidence" value="ECO:0000250"/>
    <property type="project" value="UniProtKB"/>
</dbReference>
<dbReference type="GO" id="GO:0071870">
    <property type="term" value="P:cellular response to catecholamine stimulus"/>
    <property type="evidence" value="ECO:0000250"/>
    <property type="project" value="UniProtKB"/>
</dbReference>
<dbReference type="GO" id="GO:0071376">
    <property type="term" value="P:cellular response to corticotropin-releasing hormone stimulus"/>
    <property type="evidence" value="ECO:0000250"/>
    <property type="project" value="UniProtKB"/>
</dbReference>
<dbReference type="GO" id="GO:0044320">
    <property type="term" value="P:cellular response to leptin stimulus"/>
    <property type="evidence" value="ECO:0000250"/>
    <property type="project" value="UniProtKB"/>
</dbReference>
<dbReference type="GO" id="GO:0035726">
    <property type="term" value="P:common myeloid progenitor cell proliferation"/>
    <property type="evidence" value="ECO:0000250"/>
    <property type="project" value="UniProtKB"/>
</dbReference>
<dbReference type="GO" id="GO:0097048">
    <property type="term" value="P:dendritic cell apoptotic process"/>
    <property type="evidence" value="ECO:0000266"/>
    <property type="project" value="RGD"/>
</dbReference>
<dbReference type="GO" id="GO:0097009">
    <property type="term" value="P:energy homeostasis"/>
    <property type="evidence" value="ECO:0000250"/>
    <property type="project" value="UniProtKB"/>
</dbReference>
<dbReference type="GO" id="GO:0045444">
    <property type="term" value="P:fat cell differentiation"/>
    <property type="evidence" value="ECO:0000250"/>
    <property type="project" value="UniProtKB"/>
</dbReference>
<dbReference type="GO" id="GO:0007369">
    <property type="term" value="P:gastrulation"/>
    <property type="evidence" value="ECO:0000250"/>
    <property type="project" value="UniProtKB"/>
</dbReference>
<dbReference type="GO" id="GO:0021766">
    <property type="term" value="P:hippocampus development"/>
    <property type="evidence" value="ECO:0000266"/>
    <property type="project" value="RGD"/>
</dbReference>
<dbReference type="GO" id="GO:0042472">
    <property type="term" value="P:inner ear morphogenesis"/>
    <property type="evidence" value="ECO:0000266"/>
    <property type="project" value="RGD"/>
</dbReference>
<dbReference type="GO" id="GO:0035556">
    <property type="term" value="P:intracellular signal transduction"/>
    <property type="evidence" value="ECO:0000250"/>
    <property type="project" value="UniProtKB"/>
</dbReference>
<dbReference type="GO" id="GO:0043303">
    <property type="term" value="P:mast cell degranulation"/>
    <property type="evidence" value="ECO:0000250"/>
    <property type="project" value="UniProtKB"/>
</dbReference>
<dbReference type="GO" id="GO:0001707">
    <property type="term" value="P:mesoderm formation"/>
    <property type="evidence" value="ECO:0000266"/>
    <property type="project" value="RGD"/>
</dbReference>
<dbReference type="GO" id="GO:0043524">
    <property type="term" value="P:negative regulation of neuron apoptotic process"/>
    <property type="evidence" value="ECO:0000266"/>
    <property type="project" value="RGD"/>
</dbReference>
<dbReference type="GO" id="GO:0034392">
    <property type="term" value="P:negative regulation of smooth muscle cell apoptotic process"/>
    <property type="evidence" value="ECO:0000266"/>
    <property type="project" value="RGD"/>
</dbReference>
<dbReference type="GO" id="GO:0000122">
    <property type="term" value="P:negative regulation of transcription by RNA polymerase II"/>
    <property type="evidence" value="ECO:0000250"/>
    <property type="project" value="UniProtKB"/>
</dbReference>
<dbReference type="GO" id="GO:0050885">
    <property type="term" value="P:neuromuscular process controlling balance"/>
    <property type="evidence" value="ECO:0000266"/>
    <property type="project" value="RGD"/>
</dbReference>
<dbReference type="GO" id="GO:0051402">
    <property type="term" value="P:neuron apoptotic process"/>
    <property type="evidence" value="ECO:0000266"/>
    <property type="project" value="RGD"/>
</dbReference>
<dbReference type="GO" id="GO:0048008">
    <property type="term" value="P:platelet-derived growth factor receptor signaling pathway"/>
    <property type="evidence" value="ECO:0000266"/>
    <property type="project" value="RGD"/>
</dbReference>
<dbReference type="GO" id="GO:0010613">
    <property type="term" value="P:positive regulation of cardiac muscle hypertrophy"/>
    <property type="evidence" value="ECO:0000315"/>
    <property type="project" value="UniProtKB"/>
</dbReference>
<dbReference type="GO" id="GO:0045787">
    <property type="term" value="P:positive regulation of cell cycle"/>
    <property type="evidence" value="ECO:0000266"/>
    <property type="project" value="RGD"/>
</dbReference>
<dbReference type="GO" id="GO:0010828">
    <property type="term" value="P:positive regulation of D-glucose transmembrane transport"/>
    <property type="evidence" value="ECO:0000250"/>
    <property type="project" value="UniProtKB"/>
</dbReference>
<dbReference type="GO" id="GO:2000670">
    <property type="term" value="P:positive regulation of dendritic cell apoptotic process"/>
    <property type="evidence" value="ECO:0000266"/>
    <property type="project" value="RGD"/>
</dbReference>
<dbReference type="GO" id="GO:0045893">
    <property type="term" value="P:positive regulation of DNA-templated transcription"/>
    <property type="evidence" value="ECO:0000266"/>
    <property type="project" value="RGD"/>
</dbReference>
<dbReference type="GO" id="GO:0050679">
    <property type="term" value="P:positive regulation of epithelial cell proliferation"/>
    <property type="evidence" value="ECO:0000250"/>
    <property type="project" value="UniProtKB"/>
</dbReference>
<dbReference type="GO" id="GO:2000253">
    <property type="term" value="P:positive regulation of feeding behavior"/>
    <property type="evidence" value="ECO:0000250"/>
    <property type="project" value="UniProtKB"/>
</dbReference>
<dbReference type="GO" id="GO:0038097">
    <property type="term" value="P:positive regulation of mast cell activation by Fc-epsilon receptor signaling pathway"/>
    <property type="evidence" value="ECO:0000250"/>
    <property type="project" value="UniProtKB"/>
</dbReference>
<dbReference type="GO" id="GO:0032765">
    <property type="term" value="P:positive regulation of mast cell cytokine production"/>
    <property type="evidence" value="ECO:0000250"/>
    <property type="project" value="UniProtKB"/>
</dbReference>
<dbReference type="GO" id="GO:1900625">
    <property type="term" value="P:positive regulation of monocyte aggregation"/>
    <property type="evidence" value="ECO:0000250"/>
    <property type="project" value="UniProtKB"/>
</dbReference>
<dbReference type="GO" id="GO:0048661">
    <property type="term" value="P:positive regulation of smooth muscle cell proliferation"/>
    <property type="evidence" value="ECO:0000250"/>
    <property type="project" value="UniProtKB"/>
</dbReference>
<dbReference type="GO" id="GO:0045944">
    <property type="term" value="P:positive regulation of transcription by RNA polymerase II"/>
    <property type="evidence" value="ECO:0000314"/>
    <property type="project" value="UniProtKB"/>
</dbReference>
<dbReference type="GO" id="GO:1904754">
    <property type="term" value="P:positive regulation of vascular associated smooth muscle cell migration"/>
    <property type="evidence" value="ECO:0000266"/>
    <property type="project" value="RGD"/>
</dbReference>
<dbReference type="GO" id="GO:1904707">
    <property type="term" value="P:positive regulation of vascular associated smooth muscle cell proliferation"/>
    <property type="evidence" value="ECO:0000266"/>
    <property type="project" value="RGD"/>
</dbReference>
<dbReference type="GO" id="GO:0048660">
    <property type="term" value="P:regulation of smooth muscle cell proliferation"/>
    <property type="evidence" value="ECO:0000250"/>
    <property type="project" value="UniProtKB"/>
</dbReference>
<dbReference type="GO" id="GO:0006357">
    <property type="term" value="P:regulation of transcription by RNA polymerase II"/>
    <property type="evidence" value="ECO:0000318"/>
    <property type="project" value="GO_Central"/>
</dbReference>
<dbReference type="GO" id="GO:0061469">
    <property type="term" value="P:regulation of type B pancreatic cell proliferation"/>
    <property type="evidence" value="ECO:0000315"/>
    <property type="project" value="UniProtKB"/>
</dbReference>
<dbReference type="GO" id="GO:0042542">
    <property type="term" value="P:response to hydrogen peroxide"/>
    <property type="evidence" value="ECO:0000266"/>
    <property type="project" value="RGD"/>
</dbReference>
<dbReference type="GO" id="GO:0043434">
    <property type="term" value="P:response to peptide hormone"/>
    <property type="evidence" value="ECO:0000270"/>
    <property type="project" value="RGD"/>
</dbReference>
<dbReference type="GO" id="GO:0048752">
    <property type="term" value="P:semicircular canal morphogenesis"/>
    <property type="evidence" value="ECO:0000266"/>
    <property type="project" value="RGD"/>
</dbReference>
<dbReference type="GO" id="GO:0034390">
    <property type="term" value="P:smooth muscle cell apoptotic process"/>
    <property type="evidence" value="ECO:0000266"/>
    <property type="project" value="RGD"/>
</dbReference>
<dbReference type="GO" id="GO:0060005">
    <property type="term" value="P:vestibular reflex"/>
    <property type="evidence" value="ECO:0000266"/>
    <property type="project" value="RGD"/>
</dbReference>
<dbReference type="CDD" id="cd06969">
    <property type="entry name" value="NR_DBD_NGFI-B"/>
    <property type="match status" value="1"/>
</dbReference>
<dbReference type="FunFam" id="3.30.50.10:FF:000009">
    <property type="entry name" value="nuclear receptor subfamily 4 group A member 2"/>
    <property type="match status" value="1"/>
</dbReference>
<dbReference type="Gene3D" id="3.30.50.10">
    <property type="entry name" value="Erythroid Transcription Factor GATA-1, subunit A"/>
    <property type="match status" value="1"/>
</dbReference>
<dbReference type="Gene3D" id="1.10.565.10">
    <property type="entry name" value="Retinoid X Receptor"/>
    <property type="match status" value="1"/>
</dbReference>
<dbReference type="InterPro" id="IPR035500">
    <property type="entry name" value="NHR-like_dom_sf"/>
</dbReference>
<dbReference type="InterPro" id="IPR003070">
    <property type="entry name" value="NR4A1-3"/>
</dbReference>
<dbReference type="InterPro" id="IPR003072">
    <property type="entry name" value="NR4A3"/>
</dbReference>
<dbReference type="InterPro" id="IPR000536">
    <property type="entry name" value="Nucl_hrmn_rcpt_lig-bd"/>
</dbReference>
<dbReference type="InterPro" id="IPR001723">
    <property type="entry name" value="Nuclear_hrmn_rcpt"/>
</dbReference>
<dbReference type="InterPro" id="IPR001628">
    <property type="entry name" value="Znf_hrmn_rcpt"/>
</dbReference>
<dbReference type="InterPro" id="IPR013088">
    <property type="entry name" value="Znf_NHR/GATA"/>
</dbReference>
<dbReference type="PANTHER" id="PTHR24085">
    <property type="entry name" value="NUCLEAR HORMONE RECEPTOR"/>
    <property type="match status" value="1"/>
</dbReference>
<dbReference type="PANTHER" id="PTHR24085:SF2">
    <property type="entry name" value="NUCLEAR RECEPTOR SUBFAMILY 4 GROUP A MEMBER 3"/>
    <property type="match status" value="1"/>
</dbReference>
<dbReference type="Pfam" id="PF00104">
    <property type="entry name" value="Hormone_recep"/>
    <property type="match status" value="1"/>
</dbReference>
<dbReference type="Pfam" id="PF00105">
    <property type="entry name" value="zf-C4"/>
    <property type="match status" value="1"/>
</dbReference>
<dbReference type="PRINTS" id="PR01286">
    <property type="entry name" value="NORNUCRECPTR"/>
</dbReference>
<dbReference type="PRINTS" id="PR01284">
    <property type="entry name" value="NUCLEARECPTR"/>
</dbReference>
<dbReference type="PRINTS" id="PR00398">
    <property type="entry name" value="STRDHORMONER"/>
</dbReference>
<dbReference type="PRINTS" id="PR00047">
    <property type="entry name" value="STROIDFINGER"/>
</dbReference>
<dbReference type="SMART" id="SM00430">
    <property type="entry name" value="HOLI"/>
    <property type="match status" value="1"/>
</dbReference>
<dbReference type="SMART" id="SM00399">
    <property type="entry name" value="ZnF_C4"/>
    <property type="match status" value="1"/>
</dbReference>
<dbReference type="SUPFAM" id="SSF57716">
    <property type="entry name" value="Glucocorticoid receptor-like (DNA-binding domain)"/>
    <property type="match status" value="1"/>
</dbReference>
<dbReference type="SUPFAM" id="SSF48508">
    <property type="entry name" value="Nuclear receptor ligand-binding domain"/>
    <property type="match status" value="1"/>
</dbReference>
<dbReference type="PROSITE" id="PS51843">
    <property type="entry name" value="NR_LBD"/>
    <property type="match status" value="1"/>
</dbReference>
<dbReference type="PROSITE" id="PS00031">
    <property type="entry name" value="NUCLEAR_REC_DBD_1"/>
    <property type="match status" value="1"/>
</dbReference>
<dbReference type="PROSITE" id="PS51030">
    <property type="entry name" value="NUCLEAR_REC_DBD_2"/>
    <property type="match status" value="1"/>
</dbReference>
<proteinExistence type="evidence at protein level"/>
<evidence type="ECO:0000250" key="1">
    <source>
        <dbReference type="UniProtKB" id="Q92570"/>
    </source>
</evidence>
<evidence type="ECO:0000250" key="2">
    <source>
        <dbReference type="UniProtKB" id="Q9QZB6"/>
    </source>
</evidence>
<evidence type="ECO:0000255" key="3">
    <source>
        <dbReference type="PROSITE-ProRule" id="PRU00407"/>
    </source>
</evidence>
<evidence type="ECO:0000255" key="4">
    <source>
        <dbReference type="PROSITE-ProRule" id="PRU01189"/>
    </source>
</evidence>
<evidence type="ECO:0000256" key="5">
    <source>
        <dbReference type="SAM" id="MobiDB-lite"/>
    </source>
</evidence>
<evidence type="ECO:0000269" key="6">
    <source>
    </source>
</evidence>
<evidence type="ECO:0000269" key="7">
    <source>
    </source>
</evidence>
<evidence type="ECO:0000269" key="8">
    <source>
    </source>
</evidence>
<evidence type="ECO:0000269" key="9">
    <source>
    </source>
</evidence>
<evidence type="ECO:0000269" key="10">
    <source>
    </source>
</evidence>
<evidence type="ECO:0000269" key="11">
    <source>
    </source>
</evidence>
<evidence type="ECO:0000269" key="12">
    <source>
    </source>
</evidence>
<evidence type="ECO:0000303" key="13">
    <source>
    </source>
</evidence>
<evidence type="ECO:0000305" key="14"/>
<gene>
    <name type="primary">Nr4a3</name>
    <name type="synonym">Nor1</name>
</gene>
<comment type="function">
    <text evidence="1 2 6 8 10 11 12">Transcriptional activator that binds to regulatory elements in promoter regions in a cell- and response element (target)-specific manner (PubMed:7811288). Induces gene expression by binding as monomers to the NR4A1 response element (NBRE) 5'-AAAAGGTCA-3' site and as homodimers to the Nur response element (NurRE) site in the promoter of their regulated target genes (PubMed:10523643). Plays a role in the regulation of proliferation, survival and differentiation of many different cell types and also in metabolism and inflammation. Mediates proliferation of vascular smooth muscle, myeloid progenitor cell and type B pancreatic cells; promotes mitogen-induced vascular smooth muscle cell proliferation through transactivation of SKP2 promoter by binding a NBRE site (By similarity). Upon PDGF stimulation, stimulates vascular smooth muscle cell proliferation by regulating CCND1 and CCND2 expression (PubMed:16945922). In islets, induces type B pancreatic cell proliferation through up-regulation of genes that activate cell cycle, as well as genes that cause degradation of the CDKN1A (PubMed:24706823). Negatively regulates myeloid progenitor cell proliferation by repressing RUNX1 in a NBRE site-independent manner. During inner ear, plays a role as a key mediator of the proliferative growth phase of semicircular canal development (By similarity). Also mediates survival of neuron and smooth muscle cells; mediates CREB-induced neuronal survival, and during hippocampus development, plays a critical role in pyramidal cell survival and axonal guidance. Is required for S phase entry of the cell cycle and survival of smooth muscle cells by inducing CCND1, resulting in RB1 phosphorylation. Binds to NBRE motif in CCND1 promoter, resulting in the activation of the promoter and CCND1 transcription (By similarity). Also plays a role in inflammation; Upon TNF stimulation, mediates monocyte adhesion by inducing the expression of VCAM1 and ICAM1 by binding to the NBRE consensus site (By similarity). In mast cells activated by Fc-epsilon receptor cross-linking, promotes the synthesis and release of cytokines but impairs events leading to degranulation. Also plays a role in metabolism; by modulating feeding behavior; and by playing a role in energy balance by inhibiting the glucocorticoid-induced orexigenic neuropeptides AGRP expression, at least in part by forming a complex with activated NR3C1 on the AGRP-glucocorticoid response element (GRE), and thus weakening the DNA binding activity of NR3C1. Upon catecholamines stimulation, regulates gene expression that controls oxidative metabolism in skeletal muscle (By similarity). Plays a role in glucose transport by regulating translocation of the SLC2A4 glucose transporter to the cell surface (By similarity). Finally, during gastrulation plays a crucial role in the formation of anterior mesoderm by controlling cell migration (By similarity). Also participates in cardiac hypertrophy by activating PARP1 (PubMed:25625556).</text>
</comment>
<comment type="subunit">
    <text evidence="1 2 6 7 9 11">Interacts with SIX3 (via homeobox); differentially regulates the transcriptional activities of NR4A3. Interacts with NR3C1 (via nuclear receptor DNA-binding domain); the interactions represses transcription activity of NR4A3 on the POMC promoter Nur response element (NurRE) (PubMed:15591535). Interacts with TRIM28; the interactions potentiates NR4A3 activity on NurRE promoter (PubMed:19321449). Binds DNA as a monomer and homodimer (PubMed:10523643). Interacts with PARP1; activates PARP1 by improving acetylation of PARP1 and suppressing the interaction between PARP1 and SIRT1 (PubMed:25625556). Interacts with the constituents of DNA-PK heterotrimer PRKDC, XRCC6 and XRCC5; phosphorylates and prevents NR4A3 ubiquitinylation and degradation (By similarity). Interacts with NCOA2; potentiates the activity of the NR4A3. Interacts with NCOA1, NCOA3, MED1 and KAT2B. Interacts with EP300 and NCOA2; mediates the recruitment of MED1 in the coactivator complex (By similarity).</text>
</comment>
<comment type="subcellular location">
    <subcellularLocation>
        <location evidence="3">Nucleus</location>
    </subcellularLocation>
</comment>
<comment type="alternative products">
    <event type="alternative splicing"/>
    <isoform>
        <id>P51179-1</id>
        <name>1</name>
        <name>NOR-1</name>
        <sequence type="displayed"/>
    </isoform>
    <isoform>
        <id>P51179-2</id>
        <name>2</name>
        <name>NOR-2</name>
        <sequence type="described" ref="VSP_010085 VSP_010086"/>
    </isoform>
</comment>
<comment type="tissue specificity">
    <text>Expressed at high levels in cultured apoptotic neuronal cells and fetal brain, and at low level in adult brain.</text>
</comment>
<comment type="induction">
    <text evidence="8">By PDGF through a CREB-dependent transactivation of the NOR1 promoter.</text>
</comment>
<comment type="domain">
    <text evidence="2">The AF-1 domain mediates transcription activation. The N-terminal region (1-292) directly interacts with the C-terminal LBD (380-627): the interaction is potentiated by AF-1-mediated recruitment of NCOA2.</text>
</comment>
<comment type="PTM">
    <text evidence="1">Phosphorylated by PRKDC.</text>
</comment>
<comment type="similarity">
    <text evidence="14">Belongs to the nuclear hormone receptor family. NR4 subfamily.</text>
</comment>
<keyword id="KW-0025">Alternative splicing</keyword>
<keyword id="KW-0238">DNA-binding</keyword>
<keyword id="KW-0479">Metal-binding</keyword>
<keyword id="KW-0539">Nucleus</keyword>
<keyword id="KW-0675">Receptor</keyword>
<keyword id="KW-1185">Reference proteome</keyword>
<keyword id="KW-0804">Transcription</keyword>
<keyword id="KW-0805">Transcription regulation</keyword>
<keyword id="KW-0862">Zinc</keyword>
<keyword id="KW-0863">Zinc-finger</keyword>
<reference key="1">
    <citation type="journal article" date="1994" name="Biochem. Biophys. Res. Commun.">
        <title>Molecular cloning of a novel thyroid/steroid receptor superfamily gene from cultured rat neuronal cells.</title>
        <authorList>
            <person name="Ohkura N."/>
            <person name="Hijikuro M."/>
            <person name="Yamamoto A."/>
            <person name="Miki K."/>
        </authorList>
    </citation>
    <scope>NUCLEOTIDE SEQUENCE [MRNA] (ISOFORM 1)</scope>
    <scope>FUNCTION</scope>
    <source>
        <strain>Wistar</strain>
        <tissue>Brain</tissue>
    </source>
</reference>
<reference key="2">
    <citation type="journal article" date="1995" name="FEBS Lett.">
        <title>NOR-2 (neuron-derived orphan receptor), a brain zinc finger protein, is highly induced during liver regeneration.</title>
        <authorList>
            <person name="Petropoulos I."/>
            <person name="Part D."/>
            <person name="Ochoa A."/>
            <person name="Zakin M.M."/>
            <person name="Lamas E."/>
        </authorList>
    </citation>
    <scope>NUCLEOTIDE SEQUENCE [MRNA] (ISOFORM 2)</scope>
    <source>
        <strain>Sprague-Dawley</strain>
        <tissue>Brain</tissue>
    </source>
</reference>
<reference key="3">
    <citation type="submission" date="2005-10" db="EMBL/GenBank/DDBJ databases">
        <authorList>
            <person name="Yin W."/>
            <person name="Huang Y."/>
            <person name="Su X."/>
            <person name="Zhao L."/>
            <person name="Qiu P."/>
            <person name="Yan G."/>
        </authorList>
    </citation>
    <scope>NUCLEOTIDE SEQUENCE [MRNA] (ISOFORM 1)</scope>
    <source>
        <strain>Sprague-Dawley</strain>
    </source>
</reference>
<reference key="4">
    <citation type="journal article" date="1994" name="Brain Res. Mol. Brain Res.">
        <title>Expression of nuclear hormone receptors within the rat hippocampus: identification of novel orphan receptors.</title>
        <authorList>
            <person name="Pena de Ortiz S."/>
            <person name="Cannon M.M."/>
            <person name="Jamieson G.A. Jr."/>
        </authorList>
    </citation>
    <scope>NUCLEOTIDE SEQUENCE [MRNA] OF 318-345</scope>
    <source>
        <tissue>Hippocampus</tissue>
    </source>
</reference>
<reference key="5">
    <citation type="journal article" date="1999" name="Mol. Cell. Biol.">
        <title>Heterodimerization between members of the Nur subfamily of orphan nuclear receptors as a novel mechanism for gene activation.</title>
        <authorList>
            <person name="Maira M."/>
            <person name="Martens C."/>
            <person name="Philips A."/>
            <person name="Drouin J."/>
        </authorList>
    </citation>
    <scope>FUNCTION</scope>
    <scope>HOMODIMERIZATION</scope>
</reference>
<reference key="6">
    <citation type="journal article" date="2005" name="Mol. Endocrinol.">
        <title>Protein-protein interactions and transcriptional antagonism between the subfamily of NGFI-B/Nur77 orphan nuclear receptors and glucocorticoid receptor.</title>
        <authorList>
            <person name="Martens C."/>
            <person name="Bilodeau S."/>
            <person name="Maira M."/>
            <person name="Gauthier Y."/>
            <person name="Drouin J."/>
        </authorList>
    </citation>
    <scope>INTERACTION WITH NR3C1</scope>
</reference>
<reference key="7">
    <citation type="journal article" date="2006" name="J. Biol. Chem.">
        <title>The NR4A orphan nuclear receptor NOR1 is induced by platelet-derived growth factor and mediates vascular smooth muscle cell proliferation.</title>
        <authorList>
            <person name="Nomiyama T."/>
            <person name="Nakamachi T."/>
            <person name="Gizard F."/>
            <person name="Heywood E.B."/>
            <person name="Jones K.L."/>
            <person name="Ohkura N."/>
            <person name="Kawamori R."/>
            <person name="Conneely O.M."/>
            <person name="Bruemmer D."/>
        </authorList>
    </citation>
    <scope>FUNCTION</scope>
    <scope>INDUCTION</scope>
</reference>
<reference key="8">
    <citation type="journal article" date="2009" name="J. Biol. Chem.">
        <title>TIF1beta/KAP-1 is a coactivator of the orphan nuclear receptor NGFI-B/Nur77.</title>
        <authorList>
            <person name="Rambaud J."/>
            <person name="Desroches J."/>
            <person name="Balsalobre A."/>
            <person name="Drouin J."/>
        </authorList>
    </citation>
    <scope>INTERACTION WITH TRIM28</scope>
</reference>
<reference key="9">
    <citation type="journal article" date="2014" name="Proc. Natl. Acad. Sci. U.S.A.">
        <title>Nkx6.1 regulates islet beta-cell proliferation via Nr4a1 and Nr4a3 nuclear receptors.</title>
        <authorList>
            <person name="Tessem J.S."/>
            <person name="Moss L.G."/>
            <person name="Chao L.C."/>
            <person name="Arlotto M."/>
            <person name="Lu D."/>
            <person name="Jensen M.V."/>
            <person name="Stephens S.B."/>
            <person name="Tontonoz P."/>
            <person name="Hohmeier H.E."/>
            <person name="Newgard C.B."/>
        </authorList>
    </citation>
    <scope>FUNCTION</scope>
</reference>
<reference key="10">
    <citation type="journal article" date="2015" name="Br. J. Pharmacol.">
        <title>The orphan receptor NOR1 participates in isoprenaline-induced cardiac hypertrophy by regulating PARP-1.</title>
        <authorList>
            <person name="Feng X.J."/>
            <person name="Gao H."/>
            <person name="Gao S."/>
            <person name="Li Z."/>
            <person name="Li H."/>
            <person name="Lu J."/>
            <person name="Wang J.J."/>
            <person name="Huang X.Y."/>
            <person name="Liu M."/>
            <person name="Zou J."/>
            <person name="Ye J.T."/>
            <person name="Liu P.Q."/>
        </authorList>
    </citation>
    <scope>INTERACTION WITH PARP1</scope>
</reference>
<protein>
    <recommendedName>
        <fullName>Nuclear receptor subfamily 4 group A member 3</fullName>
    </recommendedName>
    <alternativeName>
        <fullName>Neuron-derived orphan receptor 1/2</fullName>
    </alternativeName>
    <alternativeName>
        <fullName>Nuclear hormone receptor NOR-1/NOR-2</fullName>
    </alternativeName>
</protein>
<name>NR4A3_RAT</name>